<organism>
    <name type="scientific">Pongo pygmaeus</name>
    <name type="common">Bornean orangutan</name>
    <dbReference type="NCBI Taxonomy" id="9600"/>
    <lineage>
        <taxon>Eukaryota</taxon>
        <taxon>Metazoa</taxon>
        <taxon>Chordata</taxon>
        <taxon>Craniata</taxon>
        <taxon>Vertebrata</taxon>
        <taxon>Euteleostomi</taxon>
        <taxon>Mammalia</taxon>
        <taxon>Eutheria</taxon>
        <taxon>Euarchontoglires</taxon>
        <taxon>Primates</taxon>
        <taxon>Haplorrhini</taxon>
        <taxon>Catarrhini</taxon>
        <taxon>Hominidae</taxon>
        <taxon>Pongo</taxon>
    </lineage>
</organism>
<sequence length="375" mass="42722">MQKLQLCVYIYLFMLIVAGPVDLNENSEQKENVEKEGLCNACTWRQNTKSSRIEAIKIQILSKLRLETAPNISKDAIRQLLPKAPPLRELIDQYDVQRDDSSDGSLEDDDYHATTETIITMPTESDFLMQVDGKPKCCFFKFSSKIQYNKVVKAQLWIYLRPVETPTTVFVQILRLIKPMKDGTRYTGIRSLKLDMNPGTGIWQSIDVKTVLQNWLKQPESNLGIEIKALDENGHDLAVTFPGPGEDGLNPFLEVKVTDTPKRSRRDFGLDCDEHSTESRCCRYPLTVDFEAFGWDWIIAPKRYKANYCSGECEFVFLQKYPHTHLVHQANPRGSAGPCCTPTKMSPINMLYFNGKEQIIYGKIPAMVVDRCGCS</sequence>
<accession>A1C2U3</accession>
<protein>
    <recommendedName>
        <fullName>Growth/differentiation factor 8</fullName>
        <shortName>GDF-8</shortName>
    </recommendedName>
    <alternativeName>
        <fullName>Myostatin</fullName>
    </alternativeName>
</protein>
<reference key="1">
    <citation type="journal article" date="2006" name="Am. J. Hum. Genet.">
        <title>Human adaptive evolution at myostatin (GDF8), a regulator of muscle growth.</title>
        <authorList>
            <person name="Saunders M.A."/>
            <person name="Good J.M."/>
            <person name="Lawrence E.C."/>
            <person name="Ferrell R.E."/>
            <person name="Li W.H."/>
            <person name="Nachman M.W."/>
        </authorList>
    </citation>
    <scope>NUCLEOTIDE SEQUENCE [GENOMIC DNA]</scope>
</reference>
<evidence type="ECO:0000250" key="1">
    <source>
        <dbReference type="UniProtKB" id="O08689"/>
    </source>
</evidence>
<evidence type="ECO:0000250" key="2">
    <source>
        <dbReference type="UniProtKB" id="O14793"/>
    </source>
</evidence>
<evidence type="ECO:0000255" key="3"/>
<evidence type="ECO:0000305" key="4"/>
<name>GDF8_PONPY</name>
<gene>
    <name type="primary">MSTN</name>
    <name type="synonym">GDF8</name>
</gene>
<proteinExistence type="inferred from homology"/>
<keyword id="KW-0165">Cleavage on pair of basic residues</keyword>
<keyword id="KW-0202">Cytokine</keyword>
<keyword id="KW-1015">Disulfide bond</keyword>
<keyword id="KW-0325">Glycoprotein</keyword>
<keyword id="KW-0339">Growth factor</keyword>
<keyword id="KW-0358">Heparin-binding</keyword>
<keyword id="KW-0964">Secreted</keyword>
<keyword id="KW-0732">Signal</keyword>
<dbReference type="EMBL" id="DQ927192">
    <property type="protein sequence ID" value="ABI48515.1"/>
    <property type="molecule type" value="Genomic_DNA"/>
</dbReference>
<dbReference type="EMBL" id="DQ927193">
    <property type="protein sequence ID" value="ABI48516.1"/>
    <property type="molecule type" value="Genomic_DNA"/>
</dbReference>
<dbReference type="EMBL" id="DQ927194">
    <property type="protein sequence ID" value="ABI48517.1"/>
    <property type="molecule type" value="Genomic_DNA"/>
</dbReference>
<dbReference type="RefSeq" id="XP_054332845.1">
    <property type="nucleotide sequence ID" value="XM_054476870.2"/>
</dbReference>
<dbReference type="SMR" id="A1C2U3"/>
<dbReference type="GlyCosmos" id="A1C2U3">
    <property type="glycosylation" value="1 site, No reported glycans"/>
</dbReference>
<dbReference type="GeneID" id="129031085"/>
<dbReference type="GO" id="GO:0005615">
    <property type="term" value="C:extracellular space"/>
    <property type="evidence" value="ECO:0007669"/>
    <property type="project" value="UniProtKB-KW"/>
</dbReference>
<dbReference type="GO" id="GO:0005125">
    <property type="term" value="F:cytokine activity"/>
    <property type="evidence" value="ECO:0007669"/>
    <property type="project" value="UniProtKB-KW"/>
</dbReference>
<dbReference type="GO" id="GO:0008083">
    <property type="term" value="F:growth factor activity"/>
    <property type="evidence" value="ECO:0007669"/>
    <property type="project" value="UniProtKB-KW"/>
</dbReference>
<dbReference type="GO" id="GO:0008201">
    <property type="term" value="F:heparin binding"/>
    <property type="evidence" value="ECO:0007669"/>
    <property type="project" value="UniProtKB-KW"/>
</dbReference>
<dbReference type="GO" id="GO:0042802">
    <property type="term" value="F:identical protein binding"/>
    <property type="evidence" value="ECO:0000250"/>
    <property type="project" value="UniProtKB"/>
</dbReference>
<dbReference type="GO" id="GO:0014839">
    <property type="term" value="P:myoblast migration involved in skeletal muscle regeneration"/>
    <property type="evidence" value="ECO:0000250"/>
    <property type="project" value="UniProtKB"/>
</dbReference>
<dbReference type="GO" id="GO:2000818">
    <property type="term" value="P:negative regulation of myoblast proliferation"/>
    <property type="evidence" value="ECO:0000250"/>
    <property type="project" value="AgBase"/>
</dbReference>
<dbReference type="GO" id="GO:1902725">
    <property type="term" value="P:negative regulation of satellite cell differentiation"/>
    <property type="evidence" value="ECO:0000250"/>
    <property type="project" value="AgBase"/>
</dbReference>
<dbReference type="GO" id="GO:1902723">
    <property type="term" value="P:negative regulation of skeletal muscle satellite cell proliferation"/>
    <property type="evidence" value="ECO:0000250"/>
    <property type="project" value="AgBase"/>
</dbReference>
<dbReference type="GO" id="GO:0010592">
    <property type="term" value="P:positive regulation of lamellipodium assembly"/>
    <property type="evidence" value="ECO:0000250"/>
    <property type="project" value="UniProtKB"/>
</dbReference>
<dbReference type="GO" id="GO:0010759">
    <property type="term" value="P:positive regulation of macrophage chemotaxis"/>
    <property type="evidence" value="ECO:0000250"/>
    <property type="project" value="UniProtKB"/>
</dbReference>
<dbReference type="CDD" id="cd19388">
    <property type="entry name" value="TGF_beta_GDF8"/>
    <property type="match status" value="1"/>
</dbReference>
<dbReference type="FunFam" id="2.60.120.970:FF:000001">
    <property type="entry name" value="Growth/differentiation factor 8"/>
    <property type="match status" value="1"/>
</dbReference>
<dbReference type="FunFam" id="2.10.90.10:FF:000006">
    <property type="entry name" value="growth/differentiation factor 8"/>
    <property type="match status" value="1"/>
</dbReference>
<dbReference type="Gene3D" id="2.60.120.970">
    <property type="match status" value="1"/>
</dbReference>
<dbReference type="Gene3D" id="2.10.90.10">
    <property type="entry name" value="Cystine-knot cytokines"/>
    <property type="match status" value="1"/>
</dbReference>
<dbReference type="InterPro" id="IPR029034">
    <property type="entry name" value="Cystine-knot_cytokine"/>
</dbReference>
<dbReference type="InterPro" id="IPR001839">
    <property type="entry name" value="TGF-b_C"/>
</dbReference>
<dbReference type="InterPro" id="IPR001111">
    <property type="entry name" value="TGF-b_propeptide"/>
</dbReference>
<dbReference type="InterPro" id="IPR015615">
    <property type="entry name" value="TGF-beta-rel"/>
</dbReference>
<dbReference type="InterPro" id="IPR017948">
    <property type="entry name" value="TGFb_CS"/>
</dbReference>
<dbReference type="PANTHER" id="PTHR11848:SF150">
    <property type="entry name" value="GROWTH_DIFFERENTIATION FACTOR 8"/>
    <property type="match status" value="1"/>
</dbReference>
<dbReference type="PANTHER" id="PTHR11848">
    <property type="entry name" value="TGF-BETA FAMILY"/>
    <property type="match status" value="1"/>
</dbReference>
<dbReference type="Pfam" id="PF00019">
    <property type="entry name" value="TGF_beta"/>
    <property type="match status" value="1"/>
</dbReference>
<dbReference type="Pfam" id="PF00688">
    <property type="entry name" value="TGFb_propeptide"/>
    <property type="match status" value="1"/>
</dbReference>
<dbReference type="SMART" id="SM00204">
    <property type="entry name" value="TGFB"/>
    <property type="match status" value="1"/>
</dbReference>
<dbReference type="SUPFAM" id="SSF57501">
    <property type="entry name" value="Cystine-knot cytokines"/>
    <property type="match status" value="1"/>
</dbReference>
<dbReference type="PROSITE" id="PS00250">
    <property type="entry name" value="TGF_BETA_1"/>
    <property type="match status" value="1"/>
</dbReference>
<dbReference type="PROSITE" id="PS51362">
    <property type="entry name" value="TGF_BETA_2"/>
    <property type="match status" value="1"/>
</dbReference>
<comment type="function">
    <text evidence="1">Acts specifically as a negative regulator of skeletal muscle growth.</text>
</comment>
<comment type="subunit">
    <text evidence="1">Homodimer; disulfide-linked. Interacts with WFIKKN2, leading to inhibit its activity. Interacts with FSTL3.</text>
</comment>
<comment type="subcellular location">
    <subcellularLocation>
        <location evidence="1">Secreted</location>
    </subcellularLocation>
</comment>
<comment type="PTM">
    <text evidence="1">Synthesized as large precursor molecule that undergoes proteolytic cleavage to generate an N-terminal propeptide and a disulfide linked C-terminal dimer, which is the biologically active molecule. The circulating form consists of a latent complex of the C-terminal dimer and other proteins, including its propeptide, which maintain the C-terminal dimer in a latent, inactive state. Ligand activation requires additional cleavage of the prodomain by a tolloid-like metalloproteinase.</text>
</comment>
<comment type="similarity">
    <text evidence="4">Belongs to the TGF-beta family.</text>
</comment>
<feature type="signal peptide" evidence="3">
    <location>
        <begin position="1"/>
        <end position="23"/>
    </location>
</feature>
<feature type="propeptide" id="PRO_0000285568" evidence="3">
    <location>
        <begin position="24"/>
        <end position="266"/>
    </location>
</feature>
<feature type="chain" id="PRO_0000285569" description="Growth/differentiation factor 8">
    <location>
        <begin position="267"/>
        <end position="375"/>
    </location>
</feature>
<feature type="site" description="Cleavage" evidence="1">
    <location>
        <begin position="98"/>
        <end position="99"/>
    </location>
</feature>
<feature type="glycosylation site" description="N-linked (GlcNAc...) asparagine" evidence="3">
    <location>
        <position position="71"/>
    </location>
</feature>
<feature type="disulfide bond" evidence="2">
    <location>
        <begin position="272"/>
        <end position="282"/>
    </location>
</feature>
<feature type="disulfide bond" evidence="2">
    <location>
        <begin position="281"/>
        <end position="340"/>
    </location>
</feature>
<feature type="disulfide bond" evidence="2">
    <location>
        <begin position="309"/>
        <end position="372"/>
    </location>
</feature>
<feature type="disulfide bond" evidence="2">
    <location>
        <begin position="313"/>
        <end position="374"/>
    </location>
</feature>
<feature type="disulfide bond" description="Interchain" evidence="2">
    <location>
        <position position="339"/>
    </location>
</feature>